<dbReference type="EC" id="3.5.3.11" evidence="1"/>
<dbReference type="EMBL" id="CP000802">
    <property type="protein sequence ID" value="ABV07331.1"/>
    <property type="molecule type" value="Genomic_DNA"/>
</dbReference>
<dbReference type="RefSeq" id="WP_000105571.1">
    <property type="nucleotide sequence ID" value="NC_009800.1"/>
</dbReference>
<dbReference type="SMR" id="A8A477"/>
<dbReference type="KEGG" id="ecx:EcHS_A3095"/>
<dbReference type="HOGENOM" id="CLU_039478_0_0_6"/>
<dbReference type="UniPathway" id="UPA00534">
    <property type="reaction ID" value="UER00287"/>
</dbReference>
<dbReference type="GO" id="GO:0008783">
    <property type="term" value="F:agmatinase activity"/>
    <property type="evidence" value="ECO:0007669"/>
    <property type="project" value="UniProtKB-UniRule"/>
</dbReference>
<dbReference type="GO" id="GO:0030145">
    <property type="term" value="F:manganese ion binding"/>
    <property type="evidence" value="ECO:0007669"/>
    <property type="project" value="InterPro"/>
</dbReference>
<dbReference type="GO" id="GO:0033389">
    <property type="term" value="P:putrescine biosynthetic process from arginine, via agmatine"/>
    <property type="evidence" value="ECO:0007669"/>
    <property type="project" value="TreeGrafter"/>
</dbReference>
<dbReference type="GO" id="GO:0008295">
    <property type="term" value="P:spermidine biosynthetic process"/>
    <property type="evidence" value="ECO:0007669"/>
    <property type="project" value="UniProtKB-UniRule"/>
</dbReference>
<dbReference type="CDD" id="cd11592">
    <property type="entry name" value="Agmatinase_PAH"/>
    <property type="match status" value="1"/>
</dbReference>
<dbReference type="FunFam" id="3.40.800.10:FF:000001">
    <property type="entry name" value="Agmatinase"/>
    <property type="match status" value="1"/>
</dbReference>
<dbReference type="Gene3D" id="3.40.800.10">
    <property type="entry name" value="Ureohydrolase domain"/>
    <property type="match status" value="1"/>
</dbReference>
<dbReference type="HAMAP" id="MF_01418">
    <property type="entry name" value="SpeB"/>
    <property type="match status" value="1"/>
</dbReference>
<dbReference type="InterPro" id="IPR023694">
    <property type="entry name" value="Agmatinase"/>
</dbReference>
<dbReference type="InterPro" id="IPR005925">
    <property type="entry name" value="Agmatinase-rel"/>
</dbReference>
<dbReference type="InterPro" id="IPR006035">
    <property type="entry name" value="Ureohydrolase"/>
</dbReference>
<dbReference type="InterPro" id="IPR023696">
    <property type="entry name" value="Ureohydrolase_dom_sf"/>
</dbReference>
<dbReference type="InterPro" id="IPR020855">
    <property type="entry name" value="Ureohydrolase_Mn_BS"/>
</dbReference>
<dbReference type="NCBIfam" id="TIGR01230">
    <property type="entry name" value="agmatinase"/>
    <property type="match status" value="1"/>
</dbReference>
<dbReference type="NCBIfam" id="NF002564">
    <property type="entry name" value="PRK02190.1"/>
    <property type="match status" value="1"/>
</dbReference>
<dbReference type="PANTHER" id="PTHR11358">
    <property type="entry name" value="ARGINASE/AGMATINASE"/>
    <property type="match status" value="1"/>
</dbReference>
<dbReference type="PANTHER" id="PTHR11358:SF26">
    <property type="entry name" value="GUANIDINO ACID HYDROLASE, MITOCHONDRIAL"/>
    <property type="match status" value="1"/>
</dbReference>
<dbReference type="Pfam" id="PF00491">
    <property type="entry name" value="Arginase"/>
    <property type="match status" value="1"/>
</dbReference>
<dbReference type="PIRSF" id="PIRSF036979">
    <property type="entry name" value="Arginase"/>
    <property type="match status" value="1"/>
</dbReference>
<dbReference type="SUPFAM" id="SSF52768">
    <property type="entry name" value="Arginase/deacetylase"/>
    <property type="match status" value="1"/>
</dbReference>
<dbReference type="PROSITE" id="PS01053">
    <property type="entry name" value="ARGINASE_1"/>
    <property type="match status" value="1"/>
</dbReference>
<dbReference type="PROSITE" id="PS51409">
    <property type="entry name" value="ARGINASE_2"/>
    <property type="match status" value="1"/>
</dbReference>
<gene>
    <name evidence="1" type="primary">speB</name>
    <name type="ordered locus">EcHS_A3095</name>
</gene>
<proteinExistence type="inferred from homology"/>
<evidence type="ECO:0000255" key="1">
    <source>
        <dbReference type="HAMAP-Rule" id="MF_01418"/>
    </source>
</evidence>
<reference key="1">
    <citation type="journal article" date="2008" name="J. Bacteriol.">
        <title>The pangenome structure of Escherichia coli: comparative genomic analysis of E. coli commensal and pathogenic isolates.</title>
        <authorList>
            <person name="Rasko D.A."/>
            <person name="Rosovitz M.J."/>
            <person name="Myers G.S.A."/>
            <person name="Mongodin E.F."/>
            <person name="Fricke W.F."/>
            <person name="Gajer P."/>
            <person name="Crabtree J."/>
            <person name="Sebaihia M."/>
            <person name="Thomson N.R."/>
            <person name="Chaudhuri R."/>
            <person name="Henderson I.R."/>
            <person name="Sperandio V."/>
            <person name="Ravel J."/>
        </authorList>
    </citation>
    <scope>NUCLEOTIDE SEQUENCE [LARGE SCALE GENOMIC DNA]</scope>
    <source>
        <strain>HS</strain>
    </source>
</reference>
<feature type="chain" id="PRO_1000068495" description="Agmatinase">
    <location>
        <begin position="1"/>
        <end position="306"/>
    </location>
</feature>
<feature type="binding site" evidence="1">
    <location>
        <position position="126"/>
    </location>
    <ligand>
        <name>Mn(2+)</name>
        <dbReference type="ChEBI" id="CHEBI:29035"/>
    </ligand>
</feature>
<feature type="binding site" evidence="1">
    <location>
        <position position="149"/>
    </location>
    <ligand>
        <name>Mn(2+)</name>
        <dbReference type="ChEBI" id="CHEBI:29035"/>
    </ligand>
</feature>
<feature type="binding site" evidence="1">
    <location>
        <position position="151"/>
    </location>
    <ligand>
        <name>Mn(2+)</name>
        <dbReference type="ChEBI" id="CHEBI:29035"/>
    </ligand>
</feature>
<feature type="binding site" evidence="1">
    <location>
        <position position="153"/>
    </location>
    <ligand>
        <name>Mn(2+)</name>
        <dbReference type="ChEBI" id="CHEBI:29035"/>
    </ligand>
</feature>
<feature type="binding site" evidence="1">
    <location>
        <position position="230"/>
    </location>
    <ligand>
        <name>Mn(2+)</name>
        <dbReference type="ChEBI" id="CHEBI:29035"/>
    </ligand>
</feature>
<feature type="binding site" evidence="1">
    <location>
        <position position="232"/>
    </location>
    <ligand>
        <name>Mn(2+)</name>
        <dbReference type="ChEBI" id="CHEBI:29035"/>
    </ligand>
</feature>
<sequence length="306" mass="33547">MSTLGHQYDNSLVSNAFGFLRLPMNFQPYDSDADWVITGVPFDMATSGRAGGRHGPAAIRQVSTNLAWEHNRFPWNFDMRERLNVVDCGDLVYAFGDAREMSEKLQAHAEKLLAAGKRMLSFGGDHFVTLPLLRAHAKHFGKMALVHFDAHTDTYANGCEFDHGTMFYTAPKEGLIDPNHSVQIGIRTEFDKDNGFTVLDACQVNDRSVDDVIAQVKQIVGDMSVYLTFDIDCLDPAFAPGTGTPVIGGLTSDRAIKLVRGLKDLNIVGMDVVEVAPAYDQSEITALAAATLALEMLYIQAAKKGE</sequence>
<name>SPEB_ECOHS</name>
<organism>
    <name type="scientific">Escherichia coli O9:H4 (strain HS)</name>
    <dbReference type="NCBI Taxonomy" id="331112"/>
    <lineage>
        <taxon>Bacteria</taxon>
        <taxon>Pseudomonadati</taxon>
        <taxon>Pseudomonadota</taxon>
        <taxon>Gammaproteobacteria</taxon>
        <taxon>Enterobacterales</taxon>
        <taxon>Enterobacteriaceae</taxon>
        <taxon>Escherichia</taxon>
    </lineage>
</organism>
<protein>
    <recommendedName>
        <fullName evidence="1">Agmatinase</fullName>
        <ecNumber evidence="1">3.5.3.11</ecNumber>
    </recommendedName>
    <alternativeName>
        <fullName evidence="1">Agmatine ureohydrolase</fullName>
        <shortName evidence="1">AUH</shortName>
    </alternativeName>
</protein>
<keyword id="KW-0378">Hydrolase</keyword>
<keyword id="KW-0464">Manganese</keyword>
<keyword id="KW-0479">Metal-binding</keyword>
<keyword id="KW-0620">Polyamine biosynthesis</keyword>
<keyword id="KW-0661">Putrescine biosynthesis</keyword>
<keyword id="KW-0745">Spermidine biosynthesis</keyword>
<comment type="function">
    <text evidence="1">Catalyzes the formation of putrescine from agmatine.</text>
</comment>
<comment type="catalytic activity">
    <reaction evidence="1">
        <text>agmatine + H2O = urea + putrescine</text>
        <dbReference type="Rhea" id="RHEA:13929"/>
        <dbReference type="ChEBI" id="CHEBI:15377"/>
        <dbReference type="ChEBI" id="CHEBI:16199"/>
        <dbReference type="ChEBI" id="CHEBI:58145"/>
        <dbReference type="ChEBI" id="CHEBI:326268"/>
        <dbReference type="EC" id="3.5.3.11"/>
    </reaction>
</comment>
<comment type="cofactor">
    <cofactor evidence="1">
        <name>Mn(2+)</name>
        <dbReference type="ChEBI" id="CHEBI:29035"/>
    </cofactor>
</comment>
<comment type="pathway">
    <text evidence="1">Amine and polyamine biosynthesis; putrescine biosynthesis via agmatine pathway; putrescine from agmatine: step 1/1.</text>
</comment>
<comment type="similarity">
    <text evidence="1">Belongs to the arginase family. Agmatinase subfamily.</text>
</comment>
<accession>A8A477</accession>